<name>UTP11_SCHPO</name>
<organism>
    <name type="scientific">Schizosaccharomyces pombe (strain 972 / ATCC 24843)</name>
    <name type="common">Fission yeast</name>
    <dbReference type="NCBI Taxonomy" id="284812"/>
    <lineage>
        <taxon>Eukaryota</taxon>
        <taxon>Fungi</taxon>
        <taxon>Dikarya</taxon>
        <taxon>Ascomycota</taxon>
        <taxon>Taphrinomycotina</taxon>
        <taxon>Schizosaccharomycetes</taxon>
        <taxon>Schizosaccharomycetales</taxon>
        <taxon>Schizosaccharomycetaceae</taxon>
        <taxon>Schizosaccharomyces</taxon>
    </lineage>
</organism>
<feature type="chain" id="PRO_0000211051" description="Probable U3 small nucleolar RNA-associated protein 11">
    <location>
        <begin position="1"/>
        <end position="249"/>
    </location>
</feature>
<feature type="region of interest" description="Disordered" evidence="2">
    <location>
        <begin position="1"/>
        <end position="24"/>
    </location>
</feature>
<feature type="region of interest" description="Disordered" evidence="2">
    <location>
        <begin position="37"/>
        <end position="59"/>
    </location>
</feature>
<feature type="region of interest" description="Disordered" evidence="2">
    <location>
        <begin position="223"/>
        <end position="249"/>
    </location>
</feature>
<comment type="function">
    <text evidence="1">Involved in nucleolar processing of pre-18S ribosomal RNA.</text>
</comment>
<comment type="subunit">
    <text evidence="1">Component of the ribosomal small subunit (SSU) processome.</text>
</comment>
<comment type="subcellular location">
    <subcellularLocation>
        <location evidence="1">Nucleus</location>
        <location evidence="1">Nucleolus</location>
    </subcellularLocation>
</comment>
<comment type="similarity">
    <text evidence="3">Belongs to the UTP11 family.</text>
</comment>
<proteinExistence type="inferred from homology"/>
<accession>Q10106</accession>
<sequence length="249" mass="29683">MSSSFKNAGQRKNHRERAQPFERRKWGLLEKRKDYAQRAQDYKTKQKKLKRLREKALERNPDEFYHEMTHKKTKNGVPLEQREDSTIDMDTIKILKTQDIGWIRHHRNVERAKIDHLEQQMHTVGAHRNKNESRKHTIFVDNVKEAKSFNPAEFFQTTDDLVGRTENRVKKDQIENNELTNQPFSGKLHSKLKEKAATELLLRQKRDKKLAAAEERVELDRLLQGKGGRQKKKVVNGKPVYKWRNERKR</sequence>
<keyword id="KW-0539">Nucleus</keyword>
<keyword id="KW-1185">Reference proteome</keyword>
<keyword id="KW-0698">rRNA processing</keyword>
<gene>
    <name type="primary">utp11</name>
    <name type="ORF">SPAC18G6.06</name>
</gene>
<dbReference type="EMBL" id="CU329670">
    <property type="protein sequence ID" value="CAA92386.1"/>
    <property type="molecule type" value="Genomic_DNA"/>
</dbReference>
<dbReference type="PIR" id="T37920">
    <property type="entry name" value="T37920"/>
</dbReference>
<dbReference type="RefSeq" id="NP_593670.1">
    <property type="nucleotide sequence ID" value="NM_001019102.2"/>
</dbReference>
<dbReference type="SMR" id="Q10106"/>
<dbReference type="BioGRID" id="278610">
    <property type="interactions" value="7"/>
</dbReference>
<dbReference type="FunCoup" id="Q10106">
    <property type="interactions" value="450"/>
</dbReference>
<dbReference type="STRING" id="284812.Q10106"/>
<dbReference type="PaxDb" id="4896-SPAC18G6.06.1"/>
<dbReference type="EnsemblFungi" id="SPAC18G6.06.1">
    <property type="protein sequence ID" value="SPAC18G6.06.1:pep"/>
    <property type="gene ID" value="SPAC18G6.06"/>
</dbReference>
<dbReference type="GeneID" id="2542134"/>
<dbReference type="KEGG" id="spo:2542134"/>
<dbReference type="PomBase" id="SPAC18G6.06">
    <property type="gene designation" value="utp11"/>
</dbReference>
<dbReference type="VEuPathDB" id="FungiDB:SPAC18G6.06"/>
<dbReference type="eggNOG" id="KOG3237">
    <property type="taxonomic scope" value="Eukaryota"/>
</dbReference>
<dbReference type="HOGENOM" id="CLU_061887_0_2_1"/>
<dbReference type="InParanoid" id="Q10106"/>
<dbReference type="OMA" id="DLKYVVM"/>
<dbReference type="PhylomeDB" id="Q10106"/>
<dbReference type="Reactome" id="R-SPO-6791226">
    <property type="pathway name" value="Major pathway of rRNA processing in the nucleolus and cytosol"/>
</dbReference>
<dbReference type="PRO" id="PR:Q10106"/>
<dbReference type="Proteomes" id="UP000002485">
    <property type="component" value="Chromosome I"/>
</dbReference>
<dbReference type="GO" id="GO:0072686">
    <property type="term" value="C:mitotic spindle"/>
    <property type="evidence" value="ECO:0007005"/>
    <property type="project" value="PomBase"/>
</dbReference>
<dbReference type="GO" id="GO:0005730">
    <property type="term" value="C:nucleolus"/>
    <property type="evidence" value="ECO:0007005"/>
    <property type="project" value="PomBase"/>
</dbReference>
<dbReference type="GO" id="GO:0005634">
    <property type="term" value="C:nucleus"/>
    <property type="evidence" value="ECO:0007005"/>
    <property type="project" value="PomBase"/>
</dbReference>
<dbReference type="GO" id="GO:0032040">
    <property type="term" value="C:small-subunit processome"/>
    <property type="evidence" value="ECO:0000318"/>
    <property type="project" value="GO_Central"/>
</dbReference>
<dbReference type="GO" id="GO:0030515">
    <property type="term" value="F:snoRNA binding"/>
    <property type="evidence" value="ECO:0000266"/>
    <property type="project" value="PomBase"/>
</dbReference>
<dbReference type="GO" id="GO:0030490">
    <property type="term" value="P:maturation of SSU-rRNA"/>
    <property type="evidence" value="ECO:0000266"/>
    <property type="project" value="PomBase"/>
</dbReference>
<dbReference type="InterPro" id="IPR007144">
    <property type="entry name" value="SSU_processome_Utp11"/>
</dbReference>
<dbReference type="PANTHER" id="PTHR12838">
    <property type="entry name" value="U3 SMALL NUCLEOLAR RNA-ASSOCIATED PROTEIN 11"/>
    <property type="match status" value="1"/>
</dbReference>
<dbReference type="PANTHER" id="PTHR12838:SF0">
    <property type="entry name" value="U3 SMALL NUCLEOLAR RNA-ASSOCIATED PROTEIN 11-RELATED"/>
    <property type="match status" value="1"/>
</dbReference>
<dbReference type="Pfam" id="PF03998">
    <property type="entry name" value="Utp11"/>
    <property type="match status" value="1"/>
</dbReference>
<dbReference type="PIRSF" id="PIRSF015952">
    <property type="entry name" value="U3snoRNP11"/>
    <property type="match status" value="1"/>
</dbReference>
<reference key="1">
    <citation type="journal article" date="2002" name="Nature">
        <title>The genome sequence of Schizosaccharomyces pombe.</title>
        <authorList>
            <person name="Wood V."/>
            <person name="Gwilliam R."/>
            <person name="Rajandream M.A."/>
            <person name="Lyne M.H."/>
            <person name="Lyne R."/>
            <person name="Stewart A."/>
            <person name="Sgouros J.G."/>
            <person name="Peat N."/>
            <person name="Hayles J."/>
            <person name="Baker S.G."/>
            <person name="Basham D."/>
            <person name="Bowman S."/>
            <person name="Brooks K."/>
            <person name="Brown D."/>
            <person name="Brown S."/>
            <person name="Chillingworth T."/>
            <person name="Churcher C.M."/>
            <person name="Collins M."/>
            <person name="Connor R."/>
            <person name="Cronin A."/>
            <person name="Davis P."/>
            <person name="Feltwell T."/>
            <person name="Fraser A."/>
            <person name="Gentles S."/>
            <person name="Goble A."/>
            <person name="Hamlin N."/>
            <person name="Harris D.E."/>
            <person name="Hidalgo J."/>
            <person name="Hodgson G."/>
            <person name="Holroyd S."/>
            <person name="Hornsby T."/>
            <person name="Howarth S."/>
            <person name="Huckle E.J."/>
            <person name="Hunt S."/>
            <person name="Jagels K."/>
            <person name="James K.D."/>
            <person name="Jones L."/>
            <person name="Jones M."/>
            <person name="Leather S."/>
            <person name="McDonald S."/>
            <person name="McLean J."/>
            <person name="Mooney P."/>
            <person name="Moule S."/>
            <person name="Mungall K.L."/>
            <person name="Murphy L.D."/>
            <person name="Niblett D."/>
            <person name="Odell C."/>
            <person name="Oliver K."/>
            <person name="O'Neil S."/>
            <person name="Pearson D."/>
            <person name="Quail M.A."/>
            <person name="Rabbinowitsch E."/>
            <person name="Rutherford K.M."/>
            <person name="Rutter S."/>
            <person name="Saunders D."/>
            <person name="Seeger K."/>
            <person name="Sharp S."/>
            <person name="Skelton J."/>
            <person name="Simmonds M.N."/>
            <person name="Squares R."/>
            <person name="Squares S."/>
            <person name="Stevens K."/>
            <person name="Taylor K."/>
            <person name="Taylor R.G."/>
            <person name="Tivey A."/>
            <person name="Walsh S.V."/>
            <person name="Warren T."/>
            <person name="Whitehead S."/>
            <person name="Woodward J.R."/>
            <person name="Volckaert G."/>
            <person name="Aert R."/>
            <person name="Robben J."/>
            <person name="Grymonprez B."/>
            <person name="Weltjens I."/>
            <person name="Vanstreels E."/>
            <person name="Rieger M."/>
            <person name="Schaefer M."/>
            <person name="Mueller-Auer S."/>
            <person name="Gabel C."/>
            <person name="Fuchs M."/>
            <person name="Duesterhoeft A."/>
            <person name="Fritzc C."/>
            <person name="Holzer E."/>
            <person name="Moestl D."/>
            <person name="Hilbert H."/>
            <person name="Borzym K."/>
            <person name="Langer I."/>
            <person name="Beck A."/>
            <person name="Lehrach H."/>
            <person name="Reinhardt R."/>
            <person name="Pohl T.M."/>
            <person name="Eger P."/>
            <person name="Zimmermann W."/>
            <person name="Wedler H."/>
            <person name="Wambutt R."/>
            <person name="Purnelle B."/>
            <person name="Goffeau A."/>
            <person name="Cadieu E."/>
            <person name="Dreano S."/>
            <person name="Gloux S."/>
            <person name="Lelaure V."/>
            <person name="Mottier S."/>
            <person name="Galibert F."/>
            <person name="Aves S.J."/>
            <person name="Xiang Z."/>
            <person name="Hunt C."/>
            <person name="Moore K."/>
            <person name="Hurst S.M."/>
            <person name="Lucas M."/>
            <person name="Rochet M."/>
            <person name="Gaillardin C."/>
            <person name="Tallada V.A."/>
            <person name="Garzon A."/>
            <person name="Thode G."/>
            <person name="Daga R.R."/>
            <person name="Cruzado L."/>
            <person name="Jimenez J."/>
            <person name="Sanchez M."/>
            <person name="del Rey F."/>
            <person name="Benito J."/>
            <person name="Dominguez A."/>
            <person name="Revuelta J.L."/>
            <person name="Moreno S."/>
            <person name="Armstrong J."/>
            <person name="Forsburg S.L."/>
            <person name="Cerutti L."/>
            <person name="Lowe T."/>
            <person name="McCombie W.R."/>
            <person name="Paulsen I."/>
            <person name="Potashkin J."/>
            <person name="Shpakovski G.V."/>
            <person name="Ussery D."/>
            <person name="Barrell B.G."/>
            <person name="Nurse P."/>
        </authorList>
    </citation>
    <scope>NUCLEOTIDE SEQUENCE [LARGE SCALE GENOMIC DNA]</scope>
    <source>
        <strain>972 / ATCC 24843</strain>
    </source>
</reference>
<evidence type="ECO:0000250" key="1"/>
<evidence type="ECO:0000256" key="2">
    <source>
        <dbReference type="SAM" id="MobiDB-lite"/>
    </source>
</evidence>
<evidence type="ECO:0000305" key="3"/>
<protein>
    <recommendedName>
        <fullName>Probable U3 small nucleolar RNA-associated protein 11</fullName>
        <shortName>U3 snoRNA-associated protein 11</shortName>
    </recommendedName>
</protein>